<reference key="1">
    <citation type="journal article" date="2008" name="Dev. Comp. Immunol.">
        <title>Arasin 1, a proline-arginine-rich antimicrobial peptide isolated from the spider crab, Hyas araneus.</title>
        <authorList>
            <person name="Stensvag K."/>
            <person name="Haug T."/>
            <person name="Sperstad S.V."/>
            <person name="Rekdal O."/>
            <person name="Indrevoll B."/>
            <person name="Styrvold O.B."/>
        </authorList>
    </citation>
    <scope>NUCLEOTIDE SEQUENCE [MRNA]</scope>
    <scope>TISSUE SPECIFICITY</scope>
    <source>
        <tissue>Hemocyte</tissue>
    </source>
</reference>
<proteinExistence type="evidence at transcript level"/>
<dbReference type="EMBL" id="DQ859905">
    <property type="protein sequence ID" value="ABI74602.1"/>
    <property type="molecule type" value="mRNA"/>
</dbReference>
<dbReference type="GO" id="GO:0042742">
    <property type="term" value="P:defense response to bacterium"/>
    <property type="evidence" value="ECO:0007669"/>
    <property type="project" value="UniProtKB-KW"/>
</dbReference>
<dbReference type="GO" id="GO:0002376">
    <property type="term" value="P:immune system process"/>
    <property type="evidence" value="ECO:0007669"/>
    <property type="project" value="UniProtKB-KW"/>
</dbReference>
<sequence>MERRTLLVVLLVCSCVVAAAAEASPSRWPSPGRPRPFPGRPNPIFRPRPCICVRQPCPCDTYGGNRW</sequence>
<feature type="signal peptide" evidence="1">
    <location>
        <begin position="1"/>
        <end position="25"/>
    </location>
</feature>
<feature type="chain" id="PRO_5002705399" description="Arasin 2" evidence="1">
    <location>
        <begin position="26"/>
        <end position="67"/>
    </location>
</feature>
<feature type="region of interest" description="Disordered" evidence="2">
    <location>
        <begin position="22"/>
        <end position="44"/>
    </location>
</feature>
<feature type="compositionally biased region" description="Pro residues" evidence="2">
    <location>
        <begin position="31"/>
        <end position="44"/>
    </location>
</feature>
<feature type="disulfide bond" evidence="1">
    <location>
        <begin position="50"/>
        <end position="59"/>
    </location>
</feature>
<feature type="disulfide bond" evidence="1">
    <location>
        <begin position="52"/>
        <end position="57"/>
    </location>
</feature>
<keyword id="KW-0044">Antibiotic</keyword>
<keyword id="KW-0929">Antimicrobial</keyword>
<keyword id="KW-1015">Disulfide bond</keyword>
<keyword id="KW-0391">Immunity</keyword>
<keyword id="KW-0732">Signal</keyword>
<comment type="function">
    <text evidence="1">Antimicrobial peptide that has a large activity spectrum with activity against Gram-positive, Gram-negative bacteria, as well as against fungi. Shows activity at micromolar concentrations. Displays minimal inhibitory concentration (MIC) values lower than minimal bactericidal concentrations (MBC). May have a dual mode of action depending on the peptide concentrations. At MIC concentrations, the peptide penetrates into the cytoplasm of target cells (tested on the Gram-negative E.coli). The two inner membrane proteins YgdD and SbmA may be required for this uptake. At concentrations higher than MIC, arasin may act by disrupting membranes. Does not show hemolytic activity.</text>
</comment>
<comment type="subunit">
    <text evidence="1">Interacts with chitin through the N-terminal region (26-48). This interaction may be important, since chitin is a component of the fungal cell wall, as well as of the crab exoskeleton (permitting a possible action of arasin in wound healing in case of lesions).</text>
</comment>
<comment type="tissue specificity">
    <text evidence="3">Mainly expressed in hemocytes. No or very low expression in heart, gills, inestines, and epidermis.</text>
</comment>
<comment type="PTM">
    <text evidence="1">Disulfide bonds are important for activity especially against Gram-negative bacteria, since the linearization of the peptide causes a strong decrease of activity on these bacteria.</text>
</comment>
<comment type="online information" name="The antimicrobial peptide database">
    <link uri="https://wangapd3.com/database/query_output.php?ID=00988"/>
</comment>
<organism>
    <name type="scientific">Hyas araneus</name>
    <name type="common">Atlantic lyre crab</name>
    <name type="synonym">Great spider crab</name>
    <dbReference type="NCBI Taxonomy" id="361634"/>
    <lineage>
        <taxon>Eukaryota</taxon>
        <taxon>Metazoa</taxon>
        <taxon>Ecdysozoa</taxon>
        <taxon>Arthropoda</taxon>
        <taxon>Crustacea</taxon>
        <taxon>Multicrustacea</taxon>
        <taxon>Malacostraca</taxon>
        <taxon>Eumalacostraca</taxon>
        <taxon>Eucarida</taxon>
        <taxon>Decapoda</taxon>
        <taxon>Pleocyemata</taxon>
        <taxon>Brachyura</taxon>
        <taxon>Eubrachyura</taxon>
        <taxon>Majoidea</taxon>
        <taxon>Majidae</taxon>
        <taxon>Hyas</taxon>
    </lineage>
</organism>
<accession>A6XMY1</accession>
<evidence type="ECO:0000250" key="1">
    <source>
        <dbReference type="UniProtKB" id="A6XMY0"/>
    </source>
</evidence>
<evidence type="ECO:0000256" key="2">
    <source>
        <dbReference type="SAM" id="MobiDB-lite"/>
    </source>
</evidence>
<evidence type="ECO:0000269" key="3">
    <source>
    </source>
</evidence>
<evidence type="ECO:0000303" key="4">
    <source>
    </source>
</evidence>
<protein>
    <recommendedName>
        <fullName evidence="4">Arasin 2</fullName>
        <shortName evidence="4">Ara-2</shortName>
    </recommendedName>
    <alternativeName>
        <fullName evidence="4">Proline/arginine-rich antimicrobial peptide</fullName>
    </alternativeName>
</protein>
<name>ARA2_HYAAR</name>